<evidence type="ECO:0000250" key="1">
    <source>
        <dbReference type="UniProtKB" id="P69180"/>
    </source>
</evidence>
<evidence type="ECO:0000255" key="2"/>
<evidence type="ECO:0000255" key="3">
    <source>
        <dbReference type="PROSITE-ProRule" id="PRU00029"/>
    </source>
</evidence>
<evidence type="ECO:0000305" key="4"/>
<feature type="chain" id="PRO_0000373382" description="Inhibitor of apoptosis protein">
    <location>
        <begin position="1"/>
        <end position="224"/>
    </location>
</feature>
<feature type="repeat" description="BIR" evidence="3">
    <location>
        <begin position="29"/>
        <end position="92"/>
    </location>
</feature>
<feature type="zinc finger region" description="C4-type" evidence="2">
    <location>
        <begin position="189"/>
        <end position="207"/>
    </location>
</feature>
<feature type="binding site" evidence="3">
    <location>
        <position position="62"/>
    </location>
    <ligand>
        <name>Zn(2+)</name>
        <dbReference type="ChEBI" id="CHEBI:29105"/>
    </ligand>
</feature>
<feature type="binding site" evidence="3">
    <location>
        <position position="65"/>
    </location>
    <ligand>
        <name>Zn(2+)</name>
        <dbReference type="ChEBI" id="CHEBI:29105"/>
    </ligand>
</feature>
<feature type="binding site" evidence="3">
    <location>
        <position position="82"/>
    </location>
    <ligand>
        <name>Zn(2+)</name>
        <dbReference type="ChEBI" id="CHEBI:29105"/>
    </ligand>
</feature>
<feature type="binding site" evidence="3">
    <location>
        <position position="89"/>
    </location>
    <ligand>
        <name>Zn(2+)</name>
        <dbReference type="ChEBI" id="CHEBI:29105"/>
    </ligand>
</feature>
<comment type="function">
    <text evidence="1">Prevent apoptosis of host cell by inhibiting caspase-3/CASP3 activation to promote the viral replication. Also induces the activation of host NF-kappaB.</text>
</comment>
<comment type="subunit">
    <text evidence="1">Interacts with subunit p17 of host CASP3.</text>
</comment>
<comment type="subcellular location">
    <subcellularLocation>
        <location evidence="1">Host cytoplasm</location>
    </subcellularLocation>
    <subcellularLocation>
        <location evidence="1">Virion</location>
    </subcellularLocation>
    <text evidence="1">Probably accumulates in the perinuclear cytoplasmic viral factories. Found in association with viral nucleoid.</text>
</comment>
<comment type="induction">
    <text evidence="4">Expressed in the late phase of the viral replicative cycle.</text>
</comment>
<comment type="similarity">
    <text evidence="4">Belongs to the asfivirus IAP family.</text>
</comment>
<accession>P0C9X6</accession>
<protein>
    <recommendedName>
        <fullName>Inhibitor of apoptosis protein</fullName>
        <shortName>IAP</shortName>
    </recommendedName>
</protein>
<organism>
    <name type="scientific">African swine fever virus (isolate Warthog/Namibia/Wart80/1980)</name>
    <name type="common">ASFV</name>
    <dbReference type="NCBI Taxonomy" id="561444"/>
    <lineage>
        <taxon>Viruses</taxon>
        <taxon>Varidnaviria</taxon>
        <taxon>Bamfordvirae</taxon>
        <taxon>Nucleocytoviricota</taxon>
        <taxon>Pokkesviricetes</taxon>
        <taxon>Asfuvirales</taxon>
        <taxon>Asfarviridae</taxon>
        <taxon>Asfivirus</taxon>
        <taxon>African swine fever virus</taxon>
    </lineage>
</organism>
<organismHost>
    <name type="scientific">Ornithodoros</name>
    <name type="common">relapsing fever ticks</name>
    <dbReference type="NCBI Taxonomy" id="6937"/>
</organismHost>
<organismHost>
    <name type="scientific">Phacochoerus aethiopicus</name>
    <name type="common">Warthog</name>
    <dbReference type="NCBI Taxonomy" id="85517"/>
</organismHost>
<organismHost>
    <name type="scientific">Phacochoerus africanus</name>
    <name type="common">Warthog</name>
    <dbReference type="NCBI Taxonomy" id="41426"/>
</organismHost>
<organismHost>
    <name type="scientific">Potamochoerus larvatus</name>
    <name type="common">Bushpig</name>
    <dbReference type="NCBI Taxonomy" id="273792"/>
</organismHost>
<organismHost>
    <name type="scientific">Sus scrofa</name>
    <name type="common">Pig</name>
    <dbReference type="NCBI Taxonomy" id="9823"/>
</organismHost>
<dbReference type="EMBL" id="AY261366">
    <property type="status" value="NOT_ANNOTATED_CDS"/>
    <property type="molecule type" value="Genomic_DNA"/>
</dbReference>
<dbReference type="SMR" id="P0C9X6"/>
<dbReference type="Proteomes" id="UP000000858">
    <property type="component" value="Segment"/>
</dbReference>
<dbReference type="GO" id="GO:0030430">
    <property type="term" value="C:host cell cytoplasm"/>
    <property type="evidence" value="ECO:0007669"/>
    <property type="project" value="UniProtKB-SubCell"/>
</dbReference>
<dbReference type="GO" id="GO:0044423">
    <property type="term" value="C:virion component"/>
    <property type="evidence" value="ECO:0007669"/>
    <property type="project" value="UniProtKB-KW"/>
</dbReference>
<dbReference type="GO" id="GO:0008270">
    <property type="term" value="F:zinc ion binding"/>
    <property type="evidence" value="ECO:0007669"/>
    <property type="project" value="UniProtKB-KW"/>
</dbReference>
<dbReference type="GO" id="GO:0085033">
    <property type="term" value="P:symbiont-mediated activation of host NF-kappaB cascade"/>
    <property type="evidence" value="ECO:0007669"/>
    <property type="project" value="UniProtKB-KW"/>
</dbReference>
<dbReference type="GO" id="GO:0033668">
    <property type="term" value="P:symbiont-mediated suppression of host apoptosis"/>
    <property type="evidence" value="ECO:0007669"/>
    <property type="project" value="UniProtKB-KW"/>
</dbReference>
<dbReference type="CDD" id="cd00022">
    <property type="entry name" value="BIR"/>
    <property type="match status" value="1"/>
</dbReference>
<dbReference type="FunFam" id="1.10.1170.10:FF:000014">
    <property type="entry name" value="IAP-like protein p27"/>
    <property type="match status" value="1"/>
</dbReference>
<dbReference type="Gene3D" id="1.10.1170.10">
    <property type="entry name" value="Inhibitor Of Apoptosis Protein (2mihbC-IAP-1), Chain A"/>
    <property type="match status" value="1"/>
</dbReference>
<dbReference type="InterPro" id="IPR010549">
    <property type="entry name" value="ASFV_p27_C"/>
</dbReference>
<dbReference type="InterPro" id="IPR001370">
    <property type="entry name" value="BIR_rpt"/>
</dbReference>
<dbReference type="Pfam" id="PF06556">
    <property type="entry name" value="ASFV_p27"/>
    <property type="match status" value="1"/>
</dbReference>
<dbReference type="Pfam" id="PF00653">
    <property type="entry name" value="BIR"/>
    <property type="match status" value="1"/>
</dbReference>
<dbReference type="SMART" id="SM00238">
    <property type="entry name" value="BIR"/>
    <property type="match status" value="1"/>
</dbReference>
<dbReference type="SUPFAM" id="SSF57924">
    <property type="entry name" value="Inhibitor of apoptosis (IAP) repeat"/>
    <property type="match status" value="1"/>
</dbReference>
<dbReference type="PROSITE" id="PS01282">
    <property type="entry name" value="BIR_REPEAT_1"/>
    <property type="match status" value="1"/>
</dbReference>
<dbReference type="PROSITE" id="PS50143">
    <property type="entry name" value="BIR_REPEAT_2"/>
    <property type="match status" value="1"/>
</dbReference>
<proteinExistence type="inferred from homology"/>
<gene>
    <name type="ordered locus">War-044</name>
</gene>
<name>IAP_ASFWA</name>
<keyword id="KW-1074">Activation of host NF-kappa-B by virus</keyword>
<keyword id="KW-1035">Host cytoplasm</keyword>
<keyword id="KW-0945">Host-virus interaction</keyword>
<keyword id="KW-1085">Inhibition of host caspases by virus</keyword>
<keyword id="KW-0426">Late protein</keyword>
<keyword id="KW-0479">Metal-binding</keyword>
<keyword id="KW-1119">Modulation of host cell apoptosis by virus</keyword>
<keyword id="KW-0946">Virion</keyword>
<keyword id="KW-0862">Zinc</keyword>
<keyword id="KW-0863">Zinc-finger</keyword>
<sequence length="224" mass="26558">MFPKINTIDPYISLRLFEVKPKYVGYSSVDARNQSFAIHDIKNYEKFSNAGLFYTSPTEITCYCCGMKFCNWLYEKHPLQVHGFWSRNCGFMRATLGIIGLKKMIDSYNDYYNNEVFVKHKNRVYTHKKLEDMGFSKPFMQFILANAFIPPYRKYIHKIILNDRYFTFKFAAHLLSFHKVNLDNQTTYCMTCGIEPIKKDENFCNACKTLNYKHYKTLNFSVKL</sequence>
<reference key="1">
    <citation type="submission" date="2003-03" db="EMBL/GenBank/DDBJ databases">
        <title>African swine fever virus genomes.</title>
        <authorList>
            <person name="Kutish G.F."/>
            <person name="Rock D.L."/>
        </authorList>
    </citation>
    <scope>NUCLEOTIDE SEQUENCE [LARGE SCALE GENOMIC DNA]</scope>
</reference>